<sequence>MAVPKRRTSKTRKNKRRTHFKISVPGMTECPNCGEYKLSHRVCKNCGSYNGEEVAAK</sequence>
<dbReference type="EMBL" id="CP000703">
    <property type="protein sequence ID" value="ABQ48987.1"/>
    <property type="molecule type" value="Genomic_DNA"/>
</dbReference>
<dbReference type="RefSeq" id="WP_000290472.1">
    <property type="nucleotide sequence ID" value="NC_009487.1"/>
</dbReference>
<dbReference type="SMR" id="A5IS14"/>
<dbReference type="GeneID" id="98345444"/>
<dbReference type="KEGG" id="saj:SaurJH9_1187"/>
<dbReference type="HOGENOM" id="CLU_129084_1_3_9"/>
<dbReference type="GO" id="GO:0015934">
    <property type="term" value="C:large ribosomal subunit"/>
    <property type="evidence" value="ECO:0007669"/>
    <property type="project" value="InterPro"/>
</dbReference>
<dbReference type="GO" id="GO:0003735">
    <property type="term" value="F:structural constituent of ribosome"/>
    <property type="evidence" value="ECO:0007669"/>
    <property type="project" value="InterPro"/>
</dbReference>
<dbReference type="GO" id="GO:0006412">
    <property type="term" value="P:translation"/>
    <property type="evidence" value="ECO:0007669"/>
    <property type="project" value="UniProtKB-UniRule"/>
</dbReference>
<dbReference type="Gene3D" id="1.20.5.640">
    <property type="entry name" value="Single helix bin"/>
    <property type="match status" value="1"/>
</dbReference>
<dbReference type="HAMAP" id="MF_00340">
    <property type="entry name" value="Ribosomal_bL32"/>
    <property type="match status" value="1"/>
</dbReference>
<dbReference type="InterPro" id="IPR002677">
    <property type="entry name" value="Ribosomal_bL32"/>
</dbReference>
<dbReference type="InterPro" id="IPR044957">
    <property type="entry name" value="Ribosomal_bL32_bact"/>
</dbReference>
<dbReference type="InterPro" id="IPR011332">
    <property type="entry name" value="Ribosomal_zn-bd"/>
</dbReference>
<dbReference type="NCBIfam" id="TIGR01031">
    <property type="entry name" value="rpmF_bact"/>
    <property type="match status" value="1"/>
</dbReference>
<dbReference type="PANTHER" id="PTHR35534">
    <property type="entry name" value="50S RIBOSOMAL PROTEIN L32"/>
    <property type="match status" value="1"/>
</dbReference>
<dbReference type="PANTHER" id="PTHR35534:SF2">
    <property type="entry name" value="LARGE RIBOSOMAL SUBUNIT PROTEIN BL32"/>
    <property type="match status" value="1"/>
</dbReference>
<dbReference type="Pfam" id="PF01783">
    <property type="entry name" value="Ribosomal_L32p"/>
    <property type="match status" value="1"/>
</dbReference>
<dbReference type="SUPFAM" id="SSF57829">
    <property type="entry name" value="Zn-binding ribosomal proteins"/>
    <property type="match status" value="1"/>
</dbReference>
<comment type="similarity">
    <text evidence="1">Belongs to the bacterial ribosomal protein bL32 family.</text>
</comment>
<proteinExistence type="inferred from homology"/>
<keyword id="KW-0687">Ribonucleoprotein</keyword>
<keyword id="KW-0689">Ribosomal protein</keyword>
<feature type="chain" id="PRO_1000079349" description="Large ribosomal subunit protein bL32">
    <location>
        <begin position="1"/>
        <end position="57"/>
    </location>
</feature>
<evidence type="ECO:0000255" key="1">
    <source>
        <dbReference type="HAMAP-Rule" id="MF_00340"/>
    </source>
</evidence>
<evidence type="ECO:0000305" key="2"/>
<gene>
    <name evidence="1" type="primary">rpmF</name>
    <name type="ordered locus">SaurJH9_1187</name>
</gene>
<organism>
    <name type="scientific">Staphylococcus aureus (strain JH9)</name>
    <dbReference type="NCBI Taxonomy" id="359786"/>
    <lineage>
        <taxon>Bacteria</taxon>
        <taxon>Bacillati</taxon>
        <taxon>Bacillota</taxon>
        <taxon>Bacilli</taxon>
        <taxon>Bacillales</taxon>
        <taxon>Staphylococcaceae</taxon>
        <taxon>Staphylococcus</taxon>
    </lineage>
</organism>
<protein>
    <recommendedName>
        <fullName evidence="1">Large ribosomal subunit protein bL32</fullName>
    </recommendedName>
    <alternativeName>
        <fullName evidence="2">50S ribosomal protein L32</fullName>
    </alternativeName>
</protein>
<name>RL32_STAA9</name>
<reference key="1">
    <citation type="submission" date="2007-05" db="EMBL/GenBank/DDBJ databases">
        <title>Complete sequence of chromosome of Staphylococcus aureus subsp. aureus JH9.</title>
        <authorList>
            <consortium name="US DOE Joint Genome Institute"/>
            <person name="Copeland A."/>
            <person name="Lucas S."/>
            <person name="Lapidus A."/>
            <person name="Barry K."/>
            <person name="Detter J.C."/>
            <person name="Glavina del Rio T."/>
            <person name="Hammon N."/>
            <person name="Israni S."/>
            <person name="Pitluck S."/>
            <person name="Chain P."/>
            <person name="Malfatti S."/>
            <person name="Shin M."/>
            <person name="Vergez L."/>
            <person name="Schmutz J."/>
            <person name="Larimer F."/>
            <person name="Land M."/>
            <person name="Hauser L."/>
            <person name="Kyrpides N."/>
            <person name="Kim E."/>
            <person name="Tomasz A."/>
            <person name="Richardson P."/>
        </authorList>
    </citation>
    <scope>NUCLEOTIDE SEQUENCE [LARGE SCALE GENOMIC DNA]</scope>
    <source>
        <strain>JH9</strain>
    </source>
</reference>
<accession>A5IS14</accession>